<evidence type="ECO:0000255" key="1">
    <source>
        <dbReference type="HAMAP-Rule" id="MF_01345"/>
    </source>
</evidence>
<evidence type="ECO:0000305" key="2"/>
<feature type="chain" id="PRO_1000143304" description="Small ribosomal subunit protein uS17">
    <location>
        <begin position="1"/>
        <end position="84"/>
    </location>
</feature>
<proteinExistence type="inferred from homology"/>
<gene>
    <name evidence="1" type="primary">rpsQ</name>
    <name type="ordered locus">SbBS512_E3696</name>
</gene>
<organism>
    <name type="scientific">Shigella boydii serotype 18 (strain CDC 3083-94 / BS512)</name>
    <dbReference type="NCBI Taxonomy" id="344609"/>
    <lineage>
        <taxon>Bacteria</taxon>
        <taxon>Pseudomonadati</taxon>
        <taxon>Pseudomonadota</taxon>
        <taxon>Gammaproteobacteria</taxon>
        <taxon>Enterobacterales</taxon>
        <taxon>Enterobacteriaceae</taxon>
        <taxon>Shigella</taxon>
    </lineage>
</organism>
<protein>
    <recommendedName>
        <fullName evidence="1">Small ribosomal subunit protein uS17</fullName>
    </recommendedName>
    <alternativeName>
        <fullName evidence="2">30S ribosomal protein S17</fullName>
    </alternativeName>
</protein>
<name>RS17_SHIB3</name>
<reference key="1">
    <citation type="submission" date="2008-05" db="EMBL/GenBank/DDBJ databases">
        <title>Complete sequence of Shigella boydii serotype 18 strain BS512.</title>
        <authorList>
            <person name="Rasko D.A."/>
            <person name="Rosovitz M."/>
            <person name="Maurelli A.T."/>
            <person name="Myers G."/>
            <person name="Seshadri R."/>
            <person name="Cer R."/>
            <person name="Jiang L."/>
            <person name="Ravel J."/>
            <person name="Sebastian Y."/>
        </authorList>
    </citation>
    <scope>NUCLEOTIDE SEQUENCE [LARGE SCALE GENOMIC DNA]</scope>
    <source>
        <strain>CDC 3083-94 / BS512</strain>
    </source>
</reference>
<dbReference type="EMBL" id="CP001063">
    <property type="protein sequence ID" value="ACD06893.1"/>
    <property type="molecule type" value="Genomic_DNA"/>
</dbReference>
<dbReference type="RefSeq" id="WP_000130100.1">
    <property type="nucleotide sequence ID" value="NC_010658.1"/>
</dbReference>
<dbReference type="SMR" id="B2U2S9"/>
<dbReference type="STRING" id="344609.SbBS512_E3696"/>
<dbReference type="GeneID" id="93778676"/>
<dbReference type="KEGG" id="sbc:SbBS512_E3696"/>
<dbReference type="HOGENOM" id="CLU_073626_1_1_6"/>
<dbReference type="Proteomes" id="UP000001030">
    <property type="component" value="Chromosome"/>
</dbReference>
<dbReference type="GO" id="GO:0022627">
    <property type="term" value="C:cytosolic small ribosomal subunit"/>
    <property type="evidence" value="ECO:0007669"/>
    <property type="project" value="TreeGrafter"/>
</dbReference>
<dbReference type="GO" id="GO:0019843">
    <property type="term" value="F:rRNA binding"/>
    <property type="evidence" value="ECO:0007669"/>
    <property type="project" value="UniProtKB-UniRule"/>
</dbReference>
<dbReference type="GO" id="GO:0003735">
    <property type="term" value="F:structural constituent of ribosome"/>
    <property type="evidence" value="ECO:0007669"/>
    <property type="project" value="InterPro"/>
</dbReference>
<dbReference type="GO" id="GO:0006412">
    <property type="term" value="P:translation"/>
    <property type="evidence" value="ECO:0007669"/>
    <property type="project" value="UniProtKB-UniRule"/>
</dbReference>
<dbReference type="CDD" id="cd00364">
    <property type="entry name" value="Ribosomal_uS17"/>
    <property type="match status" value="1"/>
</dbReference>
<dbReference type="FunFam" id="2.40.50.140:FF:000014">
    <property type="entry name" value="30S ribosomal protein S17"/>
    <property type="match status" value="1"/>
</dbReference>
<dbReference type="Gene3D" id="2.40.50.140">
    <property type="entry name" value="Nucleic acid-binding proteins"/>
    <property type="match status" value="1"/>
</dbReference>
<dbReference type="HAMAP" id="MF_01345_B">
    <property type="entry name" value="Ribosomal_uS17_B"/>
    <property type="match status" value="1"/>
</dbReference>
<dbReference type="InterPro" id="IPR012340">
    <property type="entry name" value="NA-bd_OB-fold"/>
</dbReference>
<dbReference type="InterPro" id="IPR000266">
    <property type="entry name" value="Ribosomal_uS17"/>
</dbReference>
<dbReference type="InterPro" id="IPR019984">
    <property type="entry name" value="Ribosomal_uS17_bact/chlr"/>
</dbReference>
<dbReference type="InterPro" id="IPR019979">
    <property type="entry name" value="Ribosomal_uS17_CS"/>
</dbReference>
<dbReference type="NCBIfam" id="NF004123">
    <property type="entry name" value="PRK05610.1"/>
    <property type="match status" value="1"/>
</dbReference>
<dbReference type="NCBIfam" id="TIGR03635">
    <property type="entry name" value="uS17_bact"/>
    <property type="match status" value="1"/>
</dbReference>
<dbReference type="PANTHER" id="PTHR10744">
    <property type="entry name" value="40S RIBOSOMAL PROTEIN S11 FAMILY MEMBER"/>
    <property type="match status" value="1"/>
</dbReference>
<dbReference type="PANTHER" id="PTHR10744:SF1">
    <property type="entry name" value="SMALL RIBOSOMAL SUBUNIT PROTEIN US17M"/>
    <property type="match status" value="1"/>
</dbReference>
<dbReference type="Pfam" id="PF00366">
    <property type="entry name" value="Ribosomal_S17"/>
    <property type="match status" value="1"/>
</dbReference>
<dbReference type="PRINTS" id="PR00973">
    <property type="entry name" value="RIBOSOMALS17"/>
</dbReference>
<dbReference type="SUPFAM" id="SSF50249">
    <property type="entry name" value="Nucleic acid-binding proteins"/>
    <property type="match status" value="1"/>
</dbReference>
<dbReference type="PROSITE" id="PS00056">
    <property type="entry name" value="RIBOSOMAL_S17"/>
    <property type="match status" value="1"/>
</dbReference>
<accession>B2U2S9</accession>
<keyword id="KW-1185">Reference proteome</keyword>
<keyword id="KW-0687">Ribonucleoprotein</keyword>
<keyword id="KW-0689">Ribosomal protein</keyword>
<keyword id="KW-0694">RNA-binding</keyword>
<keyword id="KW-0699">rRNA-binding</keyword>
<comment type="function">
    <text evidence="1">One of the primary rRNA binding proteins, it binds specifically to the 5'-end of 16S ribosomal RNA.</text>
</comment>
<comment type="subunit">
    <text evidence="1">Part of the 30S ribosomal subunit.</text>
</comment>
<comment type="similarity">
    <text evidence="1">Belongs to the universal ribosomal protein uS17 family.</text>
</comment>
<sequence length="84" mass="9704">MTDKIRTLQGRVVSDKMEKSIVVAIERFVKHPIYGKFIKRTTKLHVHDENNECGIGDVVEIRECRPLSKTKSWTLVRVVEKAVL</sequence>